<keyword id="KW-0285">Flavoprotein</keyword>
<keyword id="KW-0288">FMN</keyword>
<keyword id="KW-0520">NAD</keyword>
<keyword id="KW-0560">Oxidoreductase</keyword>
<keyword id="KW-1185">Reference proteome</keyword>
<organism>
    <name type="scientific">Beijerinckia indica subsp. indica (strain ATCC 9039 / DSM 1715 / NCIMB 8712)</name>
    <dbReference type="NCBI Taxonomy" id="395963"/>
    <lineage>
        <taxon>Bacteria</taxon>
        <taxon>Pseudomonadati</taxon>
        <taxon>Pseudomonadota</taxon>
        <taxon>Alphaproteobacteria</taxon>
        <taxon>Hyphomicrobiales</taxon>
        <taxon>Beijerinckiaceae</taxon>
        <taxon>Beijerinckia</taxon>
    </lineage>
</organism>
<dbReference type="EC" id="1.6.5.-" evidence="1"/>
<dbReference type="EC" id="1.7.1.17" evidence="1"/>
<dbReference type="EMBL" id="CP001016">
    <property type="protein sequence ID" value="ACB95121.1"/>
    <property type="molecule type" value="Genomic_DNA"/>
</dbReference>
<dbReference type="RefSeq" id="WP_012384478.1">
    <property type="nucleotide sequence ID" value="NC_010581.1"/>
</dbReference>
<dbReference type="SMR" id="B2IKT2"/>
<dbReference type="STRING" id="395963.Bind_1488"/>
<dbReference type="KEGG" id="bid:Bind_1488"/>
<dbReference type="eggNOG" id="COG1182">
    <property type="taxonomic scope" value="Bacteria"/>
</dbReference>
<dbReference type="HOGENOM" id="CLU_088964_0_0_5"/>
<dbReference type="OrthoDB" id="9787136at2"/>
<dbReference type="Proteomes" id="UP000001695">
    <property type="component" value="Chromosome"/>
</dbReference>
<dbReference type="GO" id="GO:0009055">
    <property type="term" value="F:electron transfer activity"/>
    <property type="evidence" value="ECO:0007669"/>
    <property type="project" value="UniProtKB-UniRule"/>
</dbReference>
<dbReference type="GO" id="GO:0010181">
    <property type="term" value="F:FMN binding"/>
    <property type="evidence" value="ECO:0007669"/>
    <property type="project" value="UniProtKB-UniRule"/>
</dbReference>
<dbReference type="GO" id="GO:0016652">
    <property type="term" value="F:oxidoreductase activity, acting on NAD(P)H as acceptor"/>
    <property type="evidence" value="ECO:0007669"/>
    <property type="project" value="UniProtKB-UniRule"/>
</dbReference>
<dbReference type="GO" id="GO:0016655">
    <property type="term" value="F:oxidoreductase activity, acting on NAD(P)H, quinone or similar compound as acceptor"/>
    <property type="evidence" value="ECO:0007669"/>
    <property type="project" value="InterPro"/>
</dbReference>
<dbReference type="Gene3D" id="3.40.50.360">
    <property type="match status" value="1"/>
</dbReference>
<dbReference type="HAMAP" id="MF_01216">
    <property type="entry name" value="Azoreductase_type1"/>
    <property type="match status" value="1"/>
</dbReference>
<dbReference type="InterPro" id="IPR003680">
    <property type="entry name" value="Flavodoxin_fold"/>
</dbReference>
<dbReference type="InterPro" id="IPR029039">
    <property type="entry name" value="Flavoprotein-like_sf"/>
</dbReference>
<dbReference type="InterPro" id="IPR050104">
    <property type="entry name" value="FMN-dep_NADH:Q_OxRdtase_AzoR1"/>
</dbReference>
<dbReference type="InterPro" id="IPR023048">
    <property type="entry name" value="NADH:quinone_OxRdtase_FMN_depd"/>
</dbReference>
<dbReference type="PANTHER" id="PTHR43741">
    <property type="entry name" value="FMN-DEPENDENT NADH-AZOREDUCTASE 1"/>
    <property type="match status" value="1"/>
</dbReference>
<dbReference type="PANTHER" id="PTHR43741:SF4">
    <property type="entry name" value="FMN-DEPENDENT NADH:QUINONE OXIDOREDUCTASE"/>
    <property type="match status" value="1"/>
</dbReference>
<dbReference type="Pfam" id="PF02525">
    <property type="entry name" value="Flavodoxin_2"/>
    <property type="match status" value="1"/>
</dbReference>
<dbReference type="SUPFAM" id="SSF52218">
    <property type="entry name" value="Flavoproteins"/>
    <property type="match status" value="1"/>
</dbReference>
<gene>
    <name evidence="1" type="primary">azoR</name>
    <name type="ordered locus">Bind_1488</name>
</gene>
<comment type="function">
    <text evidence="1">Quinone reductase that provides resistance to thiol-specific stress caused by electrophilic quinones.</text>
</comment>
<comment type="function">
    <text evidence="1">Also exhibits azoreductase activity. Catalyzes the reductive cleavage of the azo bond in aromatic azo compounds to the corresponding amines.</text>
</comment>
<comment type="catalytic activity">
    <reaction evidence="1">
        <text>2 a quinone + NADH + H(+) = 2 a 1,4-benzosemiquinone + NAD(+)</text>
        <dbReference type="Rhea" id="RHEA:65952"/>
        <dbReference type="ChEBI" id="CHEBI:15378"/>
        <dbReference type="ChEBI" id="CHEBI:57540"/>
        <dbReference type="ChEBI" id="CHEBI:57945"/>
        <dbReference type="ChEBI" id="CHEBI:132124"/>
        <dbReference type="ChEBI" id="CHEBI:134225"/>
    </reaction>
</comment>
<comment type="catalytic activity">
    <reaction evidence="1">
        <text>N,N-dimethyl-1,4-phenylenediamine + anthranilate + 2 NAD(+) = 2-(4-dimethylaminophenyl)diazenylbenzoate + 2 NADH + 2 H(+)</text>
        <dbReference type="Rhea" id="RHEA:55872"/>
        <dbReference type="ChEBI" id="CHEBI:15378"/>
        <dbReference type="ChEBI" id="CHEBI:15783"/>
        <dbReference type="ChEBI" id="CHEBI:16567"/>
        <dbReference type="ChEBI" id="CHEBI:57540"/>
        <dbReference type="ChEBI" id="CHEBI:57945"/>
        <dbReference type="ChEBI" id="CHEBI:71579"/>
        <dbReference type="EC" id="1.7.1.17"/>
    </reaction>
</comment>
<comment type="cofactor">
    <cofactor evidence="1">
        <name>FMN</name>
        <dbReference type="ChEBI" id="CHEBI:58210"/>
    </cofactor>
    <text evidence="1">Binds 1 FMN per subunit.</text>
</comment>
<comment type="subunit">
    <text evidence="1">Homodimer.</text>
</comment>
<comment type="similarity">
    <text evidence="1">Belongs to the azoreductase type 1 family.</text>
</comment>
<feature type="chain" id="PRO_1000138965" description="FMN-dependent NADH:quinone oxidoreductase">
    <location>
        <begin position="1"/>
        <end position="202"/>
    </location>
</feature>
<feature type="binding site" evidence="1">
    <location>
        <position position="10"/>
    </location>
    <ligand>
        <name>FMN</name>
        <dbReference type="ChEBI" id="CHEBI:58210"/>
    </ligand>
</feature>
<feature type="binding site" evidence="1">
    <location>
        <begin position="16"/>
        <end position="18"/>
    </location>
    <ligand>
        <name>FMN</name>
        <dbReference type="ChEBI" id="CHEBI:58210"/>
    </ligand>
</feature>
<feature type="binding site" evidence="1">
    <location>
        <begin position="96"/>
        <end position="99"/>
    </location>
    <ligand>
        <name>FMN</name>
        <dbReference type="ChEBI" id="CHEBI:58210"/>
    </ligand>
</feature>
<accession>B2IKT2</accession>
<sequence>MKQILLIDVSPRGKDSASRSVADTLAARLTSLYPSAKLIRRDLAAQPLPHLDEITLRALSTRDAAEAERLKETARQSDQLTDELLESDLLVIATPMWNFGIPSVLKAWIDLVVRPGRTFQYADGEVLGLAKDKKAILVLASGGVFTEGPWRPWDFIEPYLRQILNFIGIVDVQTVRIEGMNIPELVVDAVPKANKAVAELVL</sequence>
<evidence type="ECO:0000255" key="1">
    <source>
        <dbReference type="HAMAP-Rule" id="MF_01216"/>
    </source>
</evidence>
<protein>
    <recommendedName>
        <fullName evidence="1">FMN-dependent NADH:quinone oxidoreductase</fullName>
        <ecNumber evidence="1">1.6.5.-</ecNumber>
    </recommendedName>
    <alternativeName>
        <fullName evidence="1">Azo-dye reductase</fullName>
    </alternativeName>
    <alternativeName>
        <fullName evidence="1">FMN-dependent NADH-azo compound oxidoreductase</fullName>
    </alternativeName>
    <alternativeName>
        <fullName evidence="1">FMN-dependent NADH-azoreductase</fullName>
        <ecNumber evidence="1">1.7.1.17</ecNumber>
    </alternativeName>
</protein>
<proteinExistence type="inferred from homology"/>
<name>AZOR_BEII9</name>
<reference key="1">
    <citation type="journal article" date="2010" name="J. Bacteriol.">
        <title>Complete genome sequence of Beijerinckia indica subsp. indica.</title>
        <authorList>
            <person name="Tamas I."/>
            <person name="Dedysh S.N."/>
            <person name="Liesack W."/>
            <person name="Stott M.B."/>
            <person name="Alam M."/>
            <person name="Murrell J.C."/>
            <person name="Dunfield P.F."/>
        </authorList>
    </citation>
    <scope>NUCLEOTIDE SEQUENCE [LARGE SCALE GENOMIC DNA]</scope>
    <source>
        <strain>ATCC 9039 / DSM 1715 / NCIMB 8712</strain>
    </source>
</reference>